<reference key="1">
    <citation type="journal article" date="2011" name="J. Bacteriol.">
        <title>Genome sequence of the verrucomicrobium Opitutus terrae PB90-1, an abundant inhabitant of rice paddy soil ecosystems.</title>
        <authorList>
            <person name="van Passel M.W."/>
            <person name="Kant R."/>
            <person name="Palva A."/>
            <person name="Copeland A."/>
            <person name="Lucas S."/>
            <person name="Lapidus A."/>
            <person name="Glavina del Rio T."/>
            <person name="Pitluck S."/>
            <person name="Goltsman E."/>
            <person name="Clum A."/>
            <person name="Sun H."/>
            <person name="Schmutz J."/>
            <person name="Larimer F.W."/>
            <person name="Land M.L."/>
            <person name="Hauser L."/>
            <person name="Kyrpides N."/>
            <person name="Mikhailova N."/>
            <person name="Richardson P.P."/>
            <person name="Janssen P.H."/>
            <person name="de Vos W.M."/>
            <person name="Smidt H."/>
        </authorList>
    </citation>
    <scope>NUCLEOTIDE SEQUENCE [LARGE SCALE GENOMIC DNA]</scope>
    <source>
        <strain>DSM 11246 / JCM 15787 / PB90-1</strain>
    </source>
</reference>
<proteinExistence type="inferred from homology"/>
<evidence type="ECO:0000255" key="1">
    <source>
        <dbReference type="HAMAP-Rule" id="MF_01849"/>
    </source>
</evidence>
<evidence type="ECO:0000255" key="2">
    <source>
        <dbReference type="PROSITE-ProRule" id="PRU01266"/>
    </source>
</evidence>
<evidence type="ECO:0000256" key="3">
    <source>
        <dbReference type="SAM" id="MobiDB-lite"/>
    </source>
</evidence>
<comment type="function">
    <text evidence="1">Specifically methylates position 2 of adenine 2503 in 23S rRNA and position 2 of adenine 37 in tRNAs.</text>
</comment>
<comment type="catalytic activity">
    <reaction evidence="1">
        <text>adenosine(2503) in 23S rRNA + 2 reduced [2Fe-2S]-[ferredoxin] + 2 S-adenosyl-L-methionine = 2-methyladenosine(2503) in 23S rRNA + 5'-deoxyadenosine + L-methionine + 2 oxidized [2Fe-2S]-[ferredoxin] + S-adenosyl-L-homocysteine</text>
        <dbReference type="Rhea" id="RHEA:42916"/>
        <dbReference type="Rhea" id="RHEA-COMP:10000"/>
        <dbReference type="Rhea" id="RHEA-COMP:10001"/>
        <dbReference type="Rhea" id="RHEA-COMP:10152"/>
        <dbReference type="Rhea" id="RHEA-COMP:10282"/>
        <dbReference type="ChEBI" id="CHEBI:17319"/>
        <dbReference type="ChEBI" id="CHEBI:33737"/>
        <dbReference type="ChEBI" id="CHEBI:33738"/>
        <dbReference type="ChEBI" id="CHEBI:57844"/>
        <dbReference type="ChEBI" id="CHEBI:57856"/>
        <dbReference type="ChEBI" id="CHEBI:59789"/>
        <dbReference type="ChEBI" id="CHEBI:74411"/>
        <dbReference type="ChEBI" id="CHEBI:74497"/>
        <dbReference type="EC" id="2.1.1.192"/>
    </reaction>
</comment>
<comment type="catalytic activity">
    <reaction evidence="1">
        <text>adenosine(37) in tRNA + 2 reduced [2Fe-2S]-[ferredoxin] + 2 S-adenosyl-L-methionine = 2-methyladenosine(37) in tRNA + 5'-deoxyadenosine + L-methionine + 2 oxidized [2Fe-2S]-[ferredoxin] + S-adenosyl-L-homocysteine</text>
        <dbReference type="Rhea" id="RHEA:43332"/>
        <dbReference type="Rhea" id="RHEA-COMP:10000"/>
        <dbReference type="Rhea" id="RHEA-COMP:10001"/>
        <dbReference type="Rhea" id="RHEA-COMP:10162"/>
        <dbReference type="Rhea" id="RHEA-COMP:10485"/>
        <dbReference type="ChEBI" id="CHEBI:17319"/>
        <dbReference type="ChEBI" id="CHEBI:33737"/>
        <dbReference type="ChEBI" id="CHEBI:33738"/>
        <dbReference type="ChEBI" id="CHEBI:57844"/>
        <dbReference type="ChEBI" id="CHEBI:57856"/>
        <dbReference type="ChEBI" id="CHEBI:59789"/>
        <dbReference type="ChEBI" id="CHEBI:74411"/>
        <dbReference type="ChEBI" id="CHEBI:74497"/>
        <dbReference type="EC" id="2.1.1.192"/>
    </reaction>
</comment>
<comment type="cofactor">
    <cofactor evidence="1">
        <name>[4Fe-4S] cluster</name>
        <dbReference type="ChEBI" id="CHEBI:49883"/>
    </cofactor>
    <text evidence="1">Binds 1 [4Fe-4S] cluster. The cluster is coordinated with 3 cysteines and an exchangeable S-adenosyl-L-methionine.</text>
</comment>
<comment type="subcellular location">
    <subcellularLocation>
        <location evidence="1">Cytoplasm</location>
    </subcellularLocation>
</comment>
<comment type="miscellaneous">
    <text evidence="1">Reaction proceeds by a ping-pong mechanism involving intermediate methylation of a conserved cysteine residue.</text>
</comment>
<comment type="similarity">
    <text evidence="1">Belongs to the radical SAM superfamily. RlmN family.</text>
</comment>
<keyword id="KW-0004">4Fe-4S</keyword>
<keyword id="KW-0963">Cytoplasm</keyword>
<keyword id="KW-1015">Disulfide bond</keyword>
<keyword id="KW-0408">Iron</keyword>
<keyword id="KW-0411">Iron-sulfur</keyword>
<keyword id="KW-0479">Metal-binding</keyword>
<keyword id="KW-0489">Methyltransferase</keyword>
<keyword id="KW-1185">Reference proteome</keyword>
<keyword id="KW-0698">rRNA processing</keyword>
<keyword id="KW-0949">S-adenosyl-L-methionine</keyword>
<keyword id="KW-0808">Transferase</keyword>
<keyword id="KW-0819">tRNA processing</keyword>
<accession>B1ZVM5</accession>
<protein>
    <recommendedName>
        <fullName evidence="1">Probable dual-specificity RNA methyltransferase RlmN 2</fullName>
        <ecNumber evidence="1">2.1.1.192</ecNumber>
    </recommendedName>
    <alternativeName>
        <fullName evidence="1">23S rRNA (adenine(2503)-C(2))-methyltransferase 2</fullName>
    </alternativeName>
    <alternativeName>
        <fullName evidence="1">23S rRNA m2A2503 methyltransferase 2</fullName>
    </alternativeName>
    <alternativeName>
        <fullName evidence="1">Ribosomal RNA large subunit methyltransferase N 2</fullName>
    </alternativeName>
    <alternativeName>
        <fullName evidence="1">tRNA (adenine(37)-C(2))-methyltransferase 2</fullName>
    </alternativeName>
    <alternativeName>
        <fullName evidence="1">tRNA m2A37 methyltransferase 2</fullName>
    </alternativeName>
</protein>
<feature type="chain" id="PRO_0000350295" description="Probable dual-specificity RNA methyltransferase RlmN 2">
    <location>
        <begin position="1"/>
        <end position="428"/>
    </location>
</feature>
<feature type="domain" description="Radical SAM core" evidence="2">
    <location>
        <begin position="148"/>
        <end position="414"/>
    </location>
</feature>
<feature type="region of interest" description="Disordered" evidence="3">
    <location>
        <begin position="207"/>
        <end position="232"/>
    </location>
</feature>
<feature type="compositionally biased region" description="Basic and acidic residues" evidence="3">
    <location>
        <begin position="207"/>
        <end position="228"/>
    </location>
</feature>
<feature type="active site" description="Proton acceptor" evidence="1">
    <location>
        <position position="142"/>
    </location>
</feature>
<feature type="active site" description="S-methylcysteine intermediate" evidence="1">
    <location>
        <position position="419"/>
    </location>
</feature>
<feature type="binding site" evidence="1">
    <location>
        <position position="162"/>
    </location>
    <ligand>
        <name>[4Fe-4S] cluster</name>
        <dbReference type="ChEBI" id="CHEBI:49883"/>
        <note>4Fe-4S-S-AdoMet</note>
    </ligand>
</feature>
<feature type="binding site" evidence="1">
    <location>
        <position position="166"/>
    </location>
    <ligand>
        <name>[4Fe-4S] cluster</name>
        <dbReference type="ChEBI" id="CHEBI:49883"/>
        <note>4Fe-4S-S-AdoMet</note>
    </ligand>
</feature>
<feature type="binding site" evidence="1">
    <location>
        <position position="169"/>
    </location>
    <ligand>
        <name>[4Fe-4S] cluster</name>
        <dbReference type="ChEBI" id="CHEBI:49883"/>
        <note>4Fe-4S-S-AdoMet</note>
    </ligand>
</feature>
<feature type="binding site" evidence="1">
    <location>
        <begin position="244"/>
        <end position="245"/>
    </location>
    <ligand>
        <name>S-adenosyl-L-methionine</name>
        <dbReference type="ChEBI" id="CHEBI:59789"/>
    </ligand>
</feature>
<feature type="binding site" evidence="1">
    <location>
        <position position="276"/>
    </location>
    <ligand>
        <name>S-adenosyl-L-methionine</name>
        <dbReference type="ChEBI" id="CHEBI:59789"/>
    </ligand>
</feature>
<feature type="binding site" evidence="1">
    <location>
        <begin position="299"/>
        <end position="301"/>
    </location>
    <ligand>
        <name>S-adenosyl-L-methionine</name>
        <dbReference type="ChEBI" id="CHEBI:59789"/>
    </ligand>
</feature>
<feature type="binding site" evidence="1">
    <location>
        <position position="375"/>
    </location>
    <ligand>
        <name>S-adenosyl-L-methionine</name>
        <dbReference type="ChEBI" id="CHEBI:59789"/>
    </ligand>
</feature>
<feature type="disulfide bond" description="(transient)" evidence="1">
    <location>
        <begin position="155"/>
        <end position="419"/>
    </location>
</feature>
<dbReference type="EC" id="2.1.1.192" evidence="1"/>
<dbReference type="EMBL" id="CP001032">
    <property type="protein sequence ID" value="ACB74122.1"/>
    <property type="molecule type" value="Genomic_DNA"/>
</dbReference>
<dbReference type="RefSeq" id="WP_012373660.1">
    <property type="nucleotide sequence ID" value="NC_010571.1"/>
</dbReference>
<dbReference type="SMR" id="B1ZVM5"/>
<dbReference type="STRING" id="452637.Oter_0834"/>
<dbReference type="KEGG" id="ote:Oter_0834"/>
<dbReference type="eggNOG" id="COG0820">
    <property type="taxonomic scope" value="Bacteria"/>
</dbReference>
<dbReference type="HOGENOM" id="CLU_029101_2_0_0"/>
<dbReference type="Proteomes" id="UP000007013">
    <property type="component" value="Chromosome"/>
</dbReference>
<dbReference type="GO" id="GO:0005737">
    <property type="term" value="C:cytoplasm"/>
    <property type="evidence" value="ECO:0007669"/>
    <property type="project" value="UniProtKB-SubCell"/>
</dbReference>
<dbReference type="GO" id="GO:0051539">
    <property type="term" value="F:4 iron, 4 sulfur cluster binding"/>
    <property type="evidence" value="ECO:0007669"/>
    <property type="project" value="UniProtKB-UniRule"/>
</dbReference>
<dbReference type="GO" id="GO:0046872">
    <property type="term" value="F:metal ion binding"/>
    <property type="evidence" value="ECO:0007669"/>
    <property type="project" value="UniProtKB-KW"/>
</dbReference>
<dbReference type="GO" id="GO:0070040">
    <property type="term" value="F:rRNA (adenine(2503)-C2-)-methyltransferase activity"/>
    <property type="evidence" value="ECO:0007669"/>
    <property type="project" value="UniProtKB-UniRule"/>
</dbReference>
<dbReference type="GO" id="GO:0019843">
    <property type="term" value="F:rRNA binding"/>
    <property type="evidence" value="ECO:0007669"/>
    <property type="project" value="UniProtKB-UniRule"/>
</dbReference>
<dbReference type="GO" id="GO:0002935">
    <property type="term" value="F:tRNA (adenine(37)-C2)-methyltransferase activity"/>
    <property type="evidence" value="ECO:0007669"/>
    <property type="project" value="UniProtKB-UniRule"/>
</dbReference>
<dbReference type="GO" id="GO:0000049">
    <property type="term" value="F:tRNA binding"/>
    <property type="evidence" value="ECO:0007669"/>
    <property type="project" value="UniProtKB-UniRule"/>
</dbReference>
<dbReference type="GO" id="GO:0070475">
    <property type="term" value="P:rRNA base methylation"/>
    <property type="evidence" value="ECO:0007669"/>
    <property type="project" value="UniProtKB-UniRule"/>
</dbReference>
<dbReference type="GO" id="GO:0030488">
    <property type="term" value="P:tRNA methylation"/>
    <property type="evidence" value="ECO:0007669"/>
    <property type="project" value="UniProtKB-UniRule"/>
</dbReference>
<dbReference type="CDD" id="cd01335">
    <property type="entry name" value="Radical_SAM"/>
    <property type="match status" value="1"/>
</dbReference>
<dbReference type="Gene3D" id="1.10.150.530">
    <property type="match status" value="1"/>
</dbReference>
<dbReference type="Gene3D" id="3.20.20.70">
    <property type="entry name" value="Aldolase class I"/>
    <property type="match status" value="1"/>
</dbReference>
<dbReference type="HAMAP" id="MF_01849">
    <property type="entry name" value="RNA_methyltr_RlmN"/>
    <property type="match status" value="1"/>
</dbReference>
<dbReference type="InterPro" id="IPR013785">
    <property type="entry name" value="Aldolase_TIM"/>
</dbReference>
<dbReference type="InterPro" id="IPR040072">
    <property type="entry name" value="Methyltransferase_A"/>
</dbReference>
<dbReference type="InterPro" id="IPR048641">
    <property type="entry name" value="RlmN_N"/>
</dbReference>
<dbReference type="InterPro" id="IPR027492">
    <property type="entry name" value="RNA_MTrfase_RlmN"/>
</dbReference>
<dbReference type="InterPro" id="IPR004383">
    <property type="entry name" value="rRNA_lsu_MTrfase_RlmN/Cfr"/>
</dbReference>
<dbReference type="InterPro" id="IPR007197">
    <property type="entry name" value="rSAM"/>
</dbReference>
<dbReference type="PANTHER" id="PTHR30544">
    <property type="entry name" value="23S RRNA METHYLTRANSFERASE"/>
    <property type="match status" value="1"/>
</dbReference>
<dbReference type="PANTHER" id="PTHR30544:SF5">
    <property type="entry name" value="RADICAL SAM CORE DOMAIN-CONTAINING PROTEIN"/>
    <property type="match status" value="1"/>
</dbReference>
<dbReference type="Pfam" id="PF04055">
    <property type="entry name" value="Radical_SAM"/>
    <property type="match status" value="1"/>
</dbReference>
<dbReference type="Pfam" id="PF21016">
    <property type="entry name" value="RlmN_N"/>
    <property type="match status" value="1"/>
</dbReference>
<dbReference type="PIRSF" id="PIRSF006004">
    <property type="entry name" value="CHP00048"/>
    <property type="match status" value="1"/>
</dbReference>
<dbReference type="SFLD" id="SFLDF00275">
    <property type="entry name" value="adenosine_C2_methyltransferase"/>
    <property type="match status" value="1"/>
</dbReference>
<dbReference type="SFLD" id="SFLDG01062">
    <property type="entry name" value="methyltransferase_(Class_A)"/>
    <property type="match status" value="1"/>
</dbReference>
<dbReference type="SUPFAM" id="SSF102114">
    <property type="entry name" value="Radical SAM enzymes"/>
    <property type="match status" value="1"/>
</dbReference>
<dbReference type="PROSITE" id="PS51918">
    <property type="entry name" value="RADICAL_SAM"/>
    <property type="match status" value="1"/>
</dbReference>
<sequence>MRFLTGNVVVRARGADFFVAIDARSAGGADAWLALTNGAPLLRRFTLSPSAPTNLYDFTRAELRLWLSRRELNPVHAARIWSYLYLDLVEGFGAMTELPARVRARLEAEMCVGNLKIARETDSRDGFTRKYLLELADGAAIETVLMRFAGRATACVSSQVGCAMGCVFCATGQMGYTRHLTAGEIVAQAVHVARALRTAAFEKCHVMRDPSPGREAGEKSRDEADRHRAPPTPRLRNLVLMGMGEPLHNYEAVMRAVDILRDDGGLALGAERITLSTVGVVPGILRLAAEKRPVHLAVSLHAADQEERAALVPVAKKWPLDELMAACRTYSETTGRRVFYEWTLIEGRNDTAAHARAVGRLLRGLPAQVNLIPLNPTAGYDGTPGRTEAARRFQEILSREFALPSTVRQRRGIDIAAGCGQLAVAEQS</sequence>
<name>RLMN2_OPITP</name>
<gene>
    <name evidence="1" type="primary">rlmN2</name>
    <name type="ordered locus">Oter_0834</name>
</gene>
<organism>
    <name type="scientific">Opitutus terrae (strain DSM 11246 / JCM 15787 / PB90-1)</name>
    <dbReference type="NCBI Taxonomy" id="452637"/>
    <lineage>
        <taxon>Bacteria</taxon>
        <taxon>Pseudomonadati</taxon>
        <taxon>Verrucomicrobiota</taxon>
        <taxon>Opitutia</taxon>
        <taxon>Opitutales</taxon>
        <taxon>Opitutaceae</taxon>
        <taxon>Opitutus</taxon>
    </lineage>
</organism>